<feature type="signal peptide" evidence="2">
    <location>
        <begin position="1"/>
        <end position="21"/>
    </location>
</feature>
<feature type="chain" id="PRO_0000269031" description="Lysine-rich arabinogalactan protein 17">
    <location>
        <begin position="22"/>
        <end position="159"/>
    </location>
</feature>
<feature type="propeptide" id="PRO_0000269032" description="Removed in mature form" evidence="2">
    <location>
        <begin position="160"/>
        <end position="185"/>
    </location>
</feature>
<feature type="region of interest" description="Disordered" evidence="3">
    <location>
        <begin position="25"/>
        <end position="160"/>
    </location>
</feature>
<feature type="compositionally biased region" description="Low complexity" evidence="3">
    <location>
        <begin position="43"/>
        <end position="68"/>
    </location>
</feature>
<feature type="compositionally biased region" description="Pro residues" evidence="3">
    <location>
        <begin position="69"/>
        <end position="88"/>
    </location>
</feature>
<feature type="compositionally biased region" description="Basic residues" evidence="3">
    <location>
        <begin position="111"/>
        <end position="122"/>
    </location>
</feature>
<feature type="compositionally biased region" description="Pro residues" evidence="3">
    <location>
        <begin position="135"/>
        <end position="146"/>
    </location>
</feature>
<feature type="lipid moiety-binding region" description="GPI-anchor amidated serine" evidence="2">
    <location>
        <position position="159"/>
    </location>
</feature>
<evidence type="ECO:0000250" key="1"/>
<evidence type="ECO:0000255" key="2"/>
<evidence type="ECO:0000256" key="3">
    <source>
        <dbReference type="SAM" id="MobiDB-lite"/>
    </source>
</evidence>
<evidence type="ECO:0000269" key="4">
    <source>
    </source>
</evidence>
<evidence type="ECO:0000269" key="5">
    <source>
    </source>
</evidence>
<evidence type="ECO:0000305" key="6"/>
<reference key="1">
    <citation type="journal article" date="2001" name="Protoplasma">
        <title>NaAGP4 is an arabinogalactan protein whose expression is suppressed by wounding and fungal infection in Nicotiana alata.</title>
        <authorList>
            <person name="Gilson P.R."/>
            <person name="Gaspar Y.M."/>
            <person name="Oxley D."/>
            <person name="Youl J.J."/>
            <person name="Bacic A."/>
        </authorList>
    </citation>
    <scope>NUCLEOTIDE SEQUENCE [MRNA]</scope>
</reference>
<reference key="2">
    <citation type="journal article" date="1999" name="Nature">
        <title>Sequence and analysis of chromosome 2 of the plant Arabidopsis thaliana.</title>
        <authorList>
            <person name="Lin X."/>
            <person name="Kaul S."/>
            <person name="Rounsley S.D."/>
            <person name="Shea T.P."/>
            <person name="Benito M.-I."/>
            <person name="Town C.D."/>
            <person name="Fujii C.Y."/>
            <person name="Mason T.M."/>
            <person name="Bowman C.L."/>
            <person name="Barnstead M.E."/>
            <person name="Feldblyum T.V."/>
            <person name="Buell C.R."/>
            <person name="Ketchum K.A."/>
            <person name="Lee J.J."/>
            <person name="Ronning C.M."/>
            <person name="Koo H.L."/>
            <person name="Moffat K.S."/>
            <person name="Cronin L.A."/>
            <person name="Shen M."/>
            <person name="Pai G."/>
            <person name="Van Aken S."/>
            <person name="Umayam L."/>
            <person name="Tallon L.J."/>
            <person name="Gill J.E."/>
            <person name="Adams M.D."/>
            <person name="Carrera A.J."/>
            <person name="Creasy T.H."/>
            <person name="Goodman H.M."/>
            <person name="Somerville C.R."/>
            <person name="Copenhaver G.P."/>
            <person name="Preuss D."/>
            <person name="Nierman W.C."/>
            <person name="White O."/>
            <person name="Eisen J.A."/>
            <person name="Salzberg S.L."/>
            <person name="Fraser C.M."/>
            <person name="Venter J.C."/>
        </authorList>
    </citation>
    <scope>NUCLEOTIDE SEQUENCE [LARGE SCALE GENOMIC DNA]</scope>
    <source>
        <strain>cv. Columbia</strain>
    </source>
</reference>
<reference key="3">
    <citation type="journal article" date="2017" name="Plant J.">
        <title>Araport11: a complete reannotation of the Arabidopsis thaliana reference genome.</title>
        <authorList>
            <person name="Cheng C.Y."/>
            <person name="Krishnakumar V."/>
            <person name="Chan A.P."/>
            <person name="Thibaud-Nissen F."/>
            <person name="Schobel S."/>
            <person name="Town C.D."/>
        </authorList>
    </citation>
    <scope>GENOME REANNOTATION</scope>
    <source>
        <strain>cv. Columbia</strain>
    </source>
</reference>
<reference key="4">
    <citation type="journal article" date="2003" name="Science">
        <title>Empirical analysis of transcriptional activity in the Arabidopsis genome.</title>
        <authorList>
            <person name="Yamada K."/>
            <person name="Lim J."/>
            <person name="Dale J.M."/>
            <person name="Chen H."/>
            <person name="Shinn P."/>
            <person name="Palm C.J."/>
            <person name="Southwick A.M."/>
            <person name="Wu H.C."/>
            <person name="Kim C.J."/>
            <person name="Nguyen M."/>
            <person name="Pham P.K."/>
            <person name="Cheuk R.F."/>
            <person name="Karlin-Newmann G."/>
            <person name="Liu S.X."/>
            <person name="Lam B."/>
            <person name="Sakano H."/>
            <person name="Wu T."/>
            <person name="Yu G."/>
            <person name="Miranda M."/>
            <person name="Quach H.L."/>
            <person name="Tripp M."/>
            <person name="Chang C.H."/>
            <person name="Lee J.M."/>
            <person name="Toriumi M.J."/>
            <person name="Chan M.M."/>
            <person name="Tang C.C."/>
            <person name="Onodera C.S."/>
            <person name="Deng J.M."/>
            <person name="Akiyama K."/>
            <person name="Ansari Y."/>
            <person name="Arakawa T."/>
            <person name="Banh J."/>
            <person name="Banno F."/>
            <person name="Bowser L."/>
            <person name="Brooks S.Y."/>
            <person name="Carninci P."/>
            <person name="Chao Q."/>
            <person name="Choy N."/>
            <person name="Enju A."/>
            <person name="Goldsmith A.D."/>
            <person name="Gurjal M."/>
            <person name="Hansen N.F."/>
            <person name="Hayashizaki Y."/>
            <person name="Johnson-Hopson C."/>
            <person name="Hsuan V.W."/>
            <person name="Iida K."/>
            <person name="Karnes M."/>
            <person name="Khan S."/>
            <person name="Koesema E."/>
            <person name="Ishida J."/>
            <person name="Jiang P.X."/>
            <person name="Jones T."/>
            <person name="Kawai J."/>
            <person name="Kamiya A."/>
            <person name="Meyers C."/>
            <person name="Nakajima M."/>
            <person name="Narusaka M."/>
            <person name="Seki M."/>
            <person name="Sakurai T."/>
            <person name="Satou M."/>
            <person name="Tamse R."/>
            <person name="Vaysberg M."/>
            <person name="Wallender E.K."/>
            <person name="Wong C."/>
            <person name="Yamamura Y."/>
            <person name="Yuan S."/>
            <person name="Shinozaki K."/>
            <person name="Davis R.W."/>
            <person name="Theologis A."/>
            <person name="Ecker J.R."/>
        </authorList>
    </citation>
    <scope>NUCLEOTIDE SEQUENCE [LARGE SCALE MRNA]</scope>
    <source>
        <strain>cv. Columbia</strain>
    </source>
</reference>
<reference key="5">
    <citation type="submission" date="2002-03" db="EMBL/GenBank/DDBJ databases">
        <title>Full-length cDNA from Arabidopsis thaliana.</title>
        <authorList>
            <person name="Brover V.V."/>
            <person name="Troukhan M.E."/>
            <person name="Alexandrov N.A."/>
            <person name="Lu Y.-P."/>
            <person name="Flavell R.B."/>
            <person name="Feldmann K.A."/>
        </authorList>
    </citation>
    <scope>NUCLEOTIDE SEQUENCE [LARGE SCALE MRNA]</scope>
</reference>
<reference key="6">
    <citation type="journal article" date="2002" name="Plant Physiol.">
        <title>Using genomic resources to guide research directions. The arabinogalactan protein gene family as a test case.</title>
        <authorList>
            <person name="Schultz C.J."/>
            <person name="Rumsewicz M.P."/>
            <person name="Johnson K.L."/>
            <person name="Jones B.J."/>
            <person name="Gaspar Y.M."/>
            <person name="Bacic A."/>
        </authorList>
    </citation>
    <scope>GENE FAMILY</scope>
    <scope>NOMENCLATURE</scope>
</reference>
<reference key="7">
    <citation type="journal article" date="2004" name="Plant Physiol.">
        <title>Characterization of the Arabidopsis lysine-rich arabinogalactan-protein AtAGP17 mutant (rat1) that results in a decreased efficiency of agrobacterium transformation.</title>
        <authorList>
            <person name="Gaspar Y.M."/>
            <person name="Nam J."/>
            <person name="Schultz C.J."/>
            <person name="Lee L.-Y."/>
            <person name="Gilson P.R."/>
            <person name="Gelvin S.B."/>
            <person name="Bacic A."/>
        </authorList>
    </citation>
    <scope>TISSUE SPECIFICITY</scope>
</reference>
<reference key="8">
    <citation type="journal article" date="2005" name="Plant Cell Physiol.">
        <title>The lysine-rich arabinogalactan-protein subfamily in Arabidopsis: gene expression, glycoprotein purification and biochemical characterization.</title>
        <authorList>
            <person name="Sun W."/>
            <person name="Xu J."/>
            <person name="Yang J."/>
            <person name="Kieliszewski M.J."/>
            <person name="Showalter A.M."/>
        </authorList>
    </citation>
    <scope>TISSUE SPECIFICITY</scope>
</reference>
<comment type="function">
    <text>Proteoglycan that seems to be implicated in diverse developmental roles such as differentiation, cell-cell recognition, embryogenesis and programmed cell death.</text>
</comment>
<comment type="subcellular location">
    <subcellularLocation>
        <location evidence="6">Cell membrane</location>
        <topology evidence="6">Lipid-anchor</topology>
        <topology evidence="6">GPI-anchor</topology>
    </subcellularLocation>
</comment>
<comment type="alternative products">
    <event type="alternative splicing"/>
    <isoform>
        <id>O22194-1</id>
        <name>1</name>
        <sequence type="displayed"/>
    </isoform>
    <text>A number of isoforms are produced. According to EST sequences.</text>
</comment>
<comment type="tissue specificity">
    <text evidence="4 5">Predominantly expressed in open flowers. Also expressed in leaves and stems, and at a lower level in roots.</text>
</comment>
<comment type="PTM">
    <text evidence="1">O-glycosylated on the hydroxyproline residues.</text>
</comment>
<comment type="similarity">
    <text evidence="6">Belongs to the lysine-rich AGP family.</text>
</comment>
<protein>
    <recommendedName>
        <fullName>Lysine-rich arabinogalactan protein 17</fullName>
        <shortName>Lys-rich AGP 17</shortName>
    </recommendedName>
</protein>
<keyword id="KW-0025">Alternative splicing</keyword>
<keyword id="KW-1003">Cell membrane</keyword>
<keyword id="KW-0325">Glycoprotein</keyword>
<keyword id="KW-0336">GPI-anchor</keyword>
<keyword id="KW-0449">Lipoprotein</keyword>
<keyword id="KW-0472">Membrane</keyword>
<keyword id="KW-0654">Proteoglycan</keyword>
<keyword id="KW-1185">Reference proteome</keyword>
<keyword id="KW-0732">Signal</keyword>
<dbReference type="EMBL" id="AF305939">
    <property type="protein sequence ID" value="AAG41963.1"/>
    <property type="molecule type" value="mRNA"/>
</dbReference>
<dbReference type="EMBL" id="AC002391">
    <property type="protein sequence ID" value="AAB87117.1"/>
    <property type="molecule type" value="Genomic_DNA"/>
</dbReference>
<dbReference type="EMBL" id="AC004401">
    <property type="protein sequence ID" value="AAM14931.1"/>
    <property type="molecule type" value="Genomic_DNA"/>
</dbReference>
<dbReference type="EMBL" id="CP002685">
    <property type="protein sequence ID" value="AEC07416.1"/>
    <property type="molecule type" value="Genomic_DNA"/>
</dbReference>
<dbReference type="EMBL" id="BT002926">
    <property type="protein sequence ID" value="AAO22741.1"/>
    <property type="molecule type" value="mRNA"/>
</dbReference>
<dbReference type="EMBL" id="BT008601">
    <property type="protein sequence ID" value="AAP40426.1"/>
    <property type="molecule type" value="mRNA"/>
</dbReference>
<dbReference type="EMBL" id="AY086875">
    <property type="protein sequence ID" value="AAM63921.1"/>
    <property type="molecule type" value="mRNA"/>
</dbReference>
<dbReference type="PIR" id="T00519">
    <property type="entry name" value="T00519"/>
</dbReference>
<dbReference type="RefSeq" id="NP_179894.1">
    <molecule id="O22194-1"/>
    <property type="nucleotide sequence ID" value="NM_127877.3"/>
</dbReference>
<dbReference type="STRING" id="3702.O22194"/>
<dbReference type="GlyGen" id="O22194">
    <property type="glycosylation" value="2 sites"/>
</dbReference>
<dbReference type="PaxDb" id="3702-AT2G23130.1"/>
<dbReference type="EnsemblPlants" id="AT2G23130.1">
    <molecule id="O22194-1"/>
    <property type="protein sequence ID" value="AT2G23130.1"/>
    <property type="gene ID" value="AT2G23130"/>
</dbReference>
<dbReference type="GeneID" id="816845"/>
<dbReference type="Gramene" id="AT2G23130.1">
    <molecule id="O22194-1"/>
    <property type="protein sequence ID" value="AT2G23130.1"/>
    <property type="gene ID" value="AT2G23130"/>
</dbReference>
<dbReference type="KEGG" id="ath:AT2G23130"/>
<dbReference type="Araport" id="AT2G23130"/>
<dbReference type="TAIR" id="AT2G23130">
    <property type="gene designation" value="AGP17"/>
</dbReference>
<dbReference type="eggNOG" id="ENOG502S14T">
    <property type="taxonomic scope" value="Eukaryota"/>
</dbReference>
<dbReference type="InParanoid" id="O22194"/>
<dbReference type="OMA" id="KSVHMAV"/>
<dbReference type="PRO" id="PR:O22194"/>
<dbReference type="Proteomes" id="UP000006548">
    <property type="component" value="Chromosome 2"/>
</dbReference>
<dbReference type="ExpressionAtlas" id="O22194">
    <property type="expression patterns" value="baseline and differential"/>
</dbReference>
<dbReference type="GO" id="GO:0005886">
    <property type="term" value="C:plasma membrane"/>
    <property type="evidence" value="ECO:0000314"/>
    <property type="project" value="TAIR"/>
</dbReference>
<dbReference type="GO" id="GO:0098552">
    <property type="term" value="C:side of membrane"/>
    <property type="evidence" value="ECO:0007669"/>
    <property type="project" value="UniProtKB-KW"/>
</dbReference>
<dbReference type="InterPro" id="IPR044981">
    <property type="entry name" value="AGP9/17/18"/>
</dbReference>
<dbReference type="PANTHER" id="PTHR37209:SF3">
    <property type="entry name" value="LYSINE-RICH ARABINOGALACTAN PROTEIN 17"/>
    <property type="match status" value="1"/>
</dbReference>
<dbReference type="PANTHER" id="PTHR37209">
    <property type="entry name" value="LYSINE-RICH ARABINOGALACTAN PROTEIN 17-RELATED"/>
    <property type="match status" value="1"/>
</dbReference>
<organism>
    <name type="scientific">Arabidopsis thaliana</name>
    <name type="common">Mouse-ear cress</name>
    <dbReference type="NCBI Taxonomy" id="3702"/>
    <lineage>
        <taxon>Eukaryota</taxon>
        <taxon>Viridiplantae</taxon>
        <taxon>Streptophyta</taxon>
        <taxon>Embryophyta</taxon>
        <taxon>Tracheophyta</taxon>
        <taxon>Spermatophyta</taxon>
        <taxon>Magnoliopsida</taxon>
        <taxon>eudicotyledons</taxon>
        <taxon>Gunneridae</taxon>
        <taxon>Pentapetalae</taxon>
        <taxon>rosids</taxon>
        <taxon>malvids</taxon>
        <taxon>Brassicales</taxon>
        <taxon>Brassicaceae</taxon>
        <taxon>Camelineae</taxon>
        <taxon>Arabidopsis</taxon>
    </lineage>
</organism>
<proteinExistence type="evidence at transcript level"/>
<gene>
    <name type="primary">AGP17</name>
    <name type="synonym">RAT1</name>
    <name type="ordered locus">At2g23130</name>
    <name type="ORF">F21P24.19</name>
    <name type="ORF">T20D16.24</name>
</gene>
<name>AGP17_ARATH</name>
<sequence length="185" mass="18481">MTRNILLTVTLICIVFITVGGQSPATAPIHSPSTSPHKPKPTSPAISPAAPTPESTEAPAKTPVEAPVEAPPSPTPASTPQISPPAPSPEADTPSAPEIAPSADVPAPALTKHKKKTKKHKTAPAPGPASELLSPPAPPGEAPGPGPSDAFSPAADDQSGAQRISVVIQMVGAAAIAWSLLVLAF</sequence>
<accession>O22194</accession>